<evidence type="ECO:0000250" key="1"/>
<evidence type="ECO:0000255" key="2"/>
<evidence type="ECO:0000255" key="3">
    <source>
        <dbReference type="PROSITE-ProRule" id="PRU00541"/>
    </source>
</evidence>
<evidence type="ECO:0000255" key="4">
    <source>
        <dbReference type="PROSITE-ProRule" id="PRU00542"/>
    </source>
</evidence>
<evidence type="ECO:0000256" key="5">
    <source>
        <dbReference type="SAM" id="MobiDB-lite"/>
    </source>
</evidence>
<evidence type="ECO:0000305" key="6"/>
<sequence length="624" mass="69935">MSPVASTCLLCEMRTVVWGWQPAVPQPWHFVRFASSARLARRKPARMALSPNVARSSDRFKDSKKKKPPPTFKNNPFGGMNQTRARLPDRPIPRSDAELKRSSSDLNNKEKDAADKKQDGSLFRALKMQIALSPIPYSRRNRIKEKIAAVTSFDQFPLLPQVREAVYANAFPTLTEISPTPIQRVAIPALLRPPISETEKNKRKKKPQEEEEEELFHFDQFLLAAETGTGKTLAYLLPIINWIKQAEMVEKDTELMDNGEKQQGVTEKSKENLFELEAPELATPEHSNVARPRAIILVPTAELVEQVGKLAKQLSHTAKFRSATISSVYTPRRITNSLFNPAGIDILISTPHLLTSIAKTNPYILSRVAHLVIDEADSLLDKSFSPLTYSIMEKTAPSLTQLILCSATIPRSLDSVMEKKFPEMKRLVTPNLHAIPRRVQLGVVDVDKDPSRGNKKLACADIIWSLGKAGEVAAFLSQKGIHTAALSRDTPDQRKDEILAEFTHVKPLPTPQEVKDAQRNKRNWFSDPVPFATGENSHLGPQRNLRDTKVLVTTDLGSRGIDTVAVRNVILFDVPHTTIDFIHRLGRTGRMGRRGRGIVLVSKKDRKDVVKEVREAMFRGQALI</sequence>
<keyword id="KW-0067">ATP-binding</keyword>
<keyword id="KW-0347">Helicase</keyword>
<keyword id="KW-0378">Hydrolase</keyword>
<keyword id="KW-0496">Mitochondrion</keyword>
<keyword id="KW-0547">Nucleotide-binding</keyword>
<keyword id="KW-1185">Reference proteome</keyword>
<keyword id="KW-0694">RNA-binding</keyword>
<keyword id="KW-0809">Transit peptide</keyword>
<gene>
    <name type="primary">MRH4</name>
    <name type="ORF">HCAG_07357</name>
</gene>
<dbReference type="EC" id="3.6.4.13"/>
<dbReference type="EMBL" id="CH476662">
    <property type="protein sequence ID" value="EDN10896.1"/>
    <property type="molecule type" value="Genomic_DNA"/>
</dbReference>
<dbReference type="SMR" id="A6RCJ9"/>
<dbReference type="STRING" id="339724.A6RCJ9"/>
<dbReference type="KEGG" id="aje:HCAG_07357"/>
<dbReference type="VEuPathDB" id="FungiDB:HCAG_07357"/>
<dbReference type="HOGENOM" id="CLU_003041_18_0_1"/>
<dbReference type="OMA" id="HSTIDFI"/>
<dbReference type="OrthoDB" id="6365at299071"/>
<dbReference type="Proteomes" id="UP000009297">
    <property type="component" value="Unassembled WGS sequence"/>
</dbReference>
<dbReference type="GO" id="GO:0005739">
    <property type="term" value="C:mitochondrion"/>
    <property type="evidence" value="ECO:0007669"/>
    <property type="project" value="UniProtKB-SubCell"/>
</dbReference>
<dbReference type="GO" id="GO:0005524">
    <property type="term" value="F:ATP binding"/>
    <property type="evidence" value="ECO:0007669"/>
    <property type="project" value="UniProtKB-KW"/>
</dbReference>
<dbReference type="GO" id="GO:0016887">
    <property type="term" value="F:ATP hydrolysis activity"/>
    <property type="evidence" value="ECO:0007669"/>
    <property type="project" value="RHEA"/>
</dbReference>
<dbReference type="GO" id="GO:0003723">
    <property type="term" value="F:RNA binding"/>
    <property type="evidence" value="ECO:0007669"/>
    <property type="project" value="UniProtKB-KW"/>
</dbReference>
<dbReference type="GO" id="GO:0003724">
    <property type="term" value="F:RNA helicase activity"/>
    <property type="evidence" value="ECO:0007669"/>
    <property type="project" value="UniProtKB-EC"/>
</dbReference>
<dbReference type="Gene3D" id="3.40.50.300">
    <property type="entry name" value="P-loop containing nucleotide triphosphate hydrolases"/>
    <property type="match status" value="2"/>
</dbReference>
<dbReference type="InterPro" id="IPR011545">
    <property type="entry name" value="DEAD/DEAH_box_helicase_dom"/>
</dbReference>
<dbReference type="InterPro" id="IPR014001">
    <property type="entry name" value="Helicase_ATP-bd"/>
</dbReference>
<dbReference type="InterPro" id="IPR001650">
    <property type="entry name" value="Helicase_C-like"/>
</dbReference>
<dbReference type="InterPro" id="IPR027417">
    <property type="entry name" value="P-loop_NTPase"/>
</dbReference>
<dbReference type="PANTHER" id="PTHR47960">
    <property type="entry name" value="DEAD-BOX ATP-DEPENDENT RNA HELICASE 50"/>
    <property type="match status" value="1"/>
</dbReference>
<dbReference type="Pfam" id="PF00270">
    <property type="entry name" value="DEAD"/>
    <property type="match status" value="1"/>
</dbReference>
<dbReference type="Pfam" id="PF00271">
    <property type="entry name" value="Helicase_C"/>
    <property type="match status" value="1"/>
</dbReference>
<dbReference type="SMART" id="SM00487">
    <property type="entry name" value="DEXDc"/>
    <property type="match status" value="1"/>
</dbReference>
<dbReference type="SMART" id="SM00490">
    <property type="entry name" value="HELICc"/>
    <property type="match status" value="1"/>
</dbReference>
<dbReference type="SUPFAM" id="SSF52540">
    <property type="entry name" value="P-loop containing nucleoside triphosphate hydrolases"/>
    <property type="match status" value="2"/>
</dbReference>
<dbReference type="PROSITE" id="PS51192">
    <property type="entry name" value="HELICASE_ATP_BIND_1"/>
    <property type="match status" value="1"/>
</dbReference>
<dbReference type="PROSITE" id="PS51194">
    <property type="entry name" value="HELICASE_CTER"/>
    <property type="match status" value="1"/>
</dbReference>
<dbReference type="PROSITE" id="PS51195">
    <property type="entry name" value="Q_MOTIF"/>
    <property type="match status" value="1"/>
</dbReference>
<reference key="1">
    <citation type="journal article" date="2009" name="Genome Res.">
        <title>Comparative genomic analyses of the human fungal pathogens Coccidioides and their relatives.</title>
        <authorList>
            <person name="Sharpton T.J."/>
            <person name="Stajich J.E."/>
            <person name="Rounsley S.D."/>
            <person name="Gardner M.J."/>
            <person name="Wortman J.R."/>
            <person name="Jordar V.S."/>
            <person name="Maiti R."/>
            <person name="Kodira C.D."/>
            <person name="Neafsey D.E."/>
            <person name="Zeng Q."/>
            <person name="Hung C.-Y."/>
            <person name="McMahan C."/>
            <person name="Muszewska A."/>
            <person name="Grynberg M."/>
            <person name="Mandel M.A."/>
            <person name="Kellner E.M."/>
            <person name="Barker B.M."/>
            <person name="Galgiani J.N."/>
            <person name="Orbach M.J."/>
            <person name="Kirkland T.N."/>
            <person name="Cole G.T."/>
            <person name="Henn M.R."/>
            <person name="Birren B.W."/>
            <person name="Taylor J.W."/>
        </authorList>
    </citation>
    <scope>NUCLEOTIDE SEQUENCE [LARGE SCALE GENOMIC DNA]</scope>
    <source>
        <strain>NAm1 / WU24</strain>
    </source>
</reference>
<proteinExistence type="inferred from homology"/>
<accession>A6RCJ9</accession>
<protein>
    <recommendedName>
        <fullName>ATP-dependent RNA helicase MRH4, mitochondrial</fullName>
        <ecNumber>3.6.4.13</ecNumber>
    </recommendedName>
</protein>
<organism>
    <name type="scientific">Ajellomyces capsulatus (strain NAm1 / WU24)</name>
    <name type="common">Darling's disease fungus</name>
    <name type="synonym">Histoplasma capsulatum</name>
    <dbReference type="NCBI Taxonomy" id="2059318"/>
    <lineage>
        <taxon>Eukaryota</taxon>
        <taxon>Fungi</taxon>
        <taxon>Dikarya</taxon>
        <taxon>Ascomycota</taxon>
        <taxon>Pezizomycotina</taxon>
        <taxon>Eurotiomycetes</taxon>
        <taxon>Eurotiomycetidae</taxon>
        <taxon>Onygenales</taxon>
        <taxon>Ajellomycetaceae</taxon>
        <taxon>Histoplasma</taxon>
    </lineage>
</organism>
<feature type="transit peptide" description="Mitochondrion" evidence="2">
    <location>
        <begin position="1"/>
        <end position="43"/>
    </location>
</feature>
<feature type="chain" id="PRO_0000310259" description="ATP-dependent RNA helicase MRH4, mitochondrial">
    <location>
        <begin position="44"/>
        <end position="624"/>
    </location>
</feature>
<feature type="domain" description="Helicase ATP-binding" evidence="3">
    <location>
        <begin position="212"/>
        <end position="427"/>
    </location>
</feature>
<feature type="domain" description="Helicase C-terminal" evidence="4">
    <location>
        <begin position="438"/>
        <end position="624"/>
    </location>
</feature>
<feature type="region of interest" description="Disordered" evidence="5">
    <location>
        <begin position="41"/>
        <end position="120"/>
    </location>
</feature>
<feature type="short sequence motif" description="Q motif">
    <location>
        <begin position="151"/>
        <end position="184"/>
    </location>
</feature>
<feature type="short sequence motif" description="DEAD box">
    <location>
        <begin position="374"/>
        <end position="377"/>
    </location>
</feature>
<feature type="compositionally biased region" description="Basic and acidic residues" evidence="5">
    <location>
        <begin position="86"/>
        <end position="119"/>
    </location>
</feature>
<feature type="binding site" evidence="3">
    <location>
        <begin position="225"/>
        <end position="232"/>
    </location>
    <ligand>
        <name>ATP</name>
        <dbReference type="ChEBI" id="CHEBI:30616"/>
    </ligand>
</feature>
<name>MRH4_AJECN</name>
<comment type="function">
    <text evidence="1">ATP-binding RNA helicase involved in mitochondrial RNA metabolism. Required for maintenance of mitochondrial DNA (By similarity).</text>
</comment>
<comment type="catalytic activity">
    <reaction>
        <text>ATP + H2O = ADP + phosphate + H(+)</text>
        <dbReference type="Rhea" id="RHEA:13065"/>
        <dbReference type="ChEBI" id="CHEBI:15377"/>
        <dbReference type="ChEBI" id="CHEBI:15378"/>
        <dbReference type="ChEBI" id="CHEBI:30616"/>
        <dbReference type="ChEBI" id="CHEBI:43474"/>
        <dbReference type="ChEBI" id="CHEBI:456216"/>
        <dbReference type="EC" id="3.6.4.13"/>
    </reaction>
</comment>
<comment type="subcellular location">
    <subcellularLocation>
        <location evidence="1">Mitochondrion</location>
    </subcellularLocation>
</comment>
<comment type="domain">
    <text>The Q motif is unique to and characteristic of the DEAD box family of RNA helicases and controls ATP binding and hydrolysis.</text>
</comment>
<comment type="similarity">
    <text evidence="6">Belongs to the DEAD box helicase family. MRH4 subfamily.</text>
</comment>